<feature type="chain" id="PRO_1000077761" description="UvrABC system protein C">
    <location>
        <begin position="1"/>
        <end position="747"/>
    </location>
</feature>
<feature type="domain" description="GIY-YIG" evidence="1">
    <location>
        <begin position="22"/>
        <end position="100"/>
    </location>
</feature>
<feature type="domain" description="UVR" evidence="1">
    <location>
        <begin position="209"/>
        <end position="244"/>
    </location>
</feature>
<feature type="region of interest" description="Disordered" evidence="2">
    <location>
        <begin position="363"/>
        <end position="400"/>
    </location>
</feature>
<feature type="compositionally biased region" description="Basic and acidic residues" evidence="2">
    <location>
        <begin position="370"/>
        <end position="387"/>
    </location>
</feature>
<feature type="compositionally biased region" description="Low complexity" evidence="2">
    <location>
        <begin position="388"/>
        <end position="400"/>
    </location>
</feature>
<comment type="function">
    <text evidence="1">The UvrABC repair system catalyzes the recognition and processing of DNA lesions. UvrC both incises the 5' and 3' sides of the lesion. The N-terminal half is responsible for the 3' incision and the C-terminal half is responsible for the 5' incision.</text>
</comment>
<comment type="subunit">
    <text evidence="1">Interacts with UvrB in an incision complex.</text>
</comment>
<comment type="subcellular location">
    <subcellularLocation>
        <location evidence="1">Cytoplasm</location>
    </subcellularLocation>
</comment>
<comment type="similarity">
    <text evidence="1">Belongs to the UvrC family.</text>
</comment>
<proteinExistence type="inferred from homology"/>
<protein>
    <recommendedName>
        <fullName evidence="1">UvrABC system protein C</fullName>
        <shortName evidence="1">Protein UvrC</shortName>
    </recommendedName>
    <alternativeName>
        <fullName evidence="1">Excinuclease ABC subunit C</fullName>
    </alternativeName>
</protein>
<reference key="1">
    <citation type="journal article" date="2010" name="Genome Biol. Evol.">
        <title>Continuing evolution of Burkholderia mallei through genome reduction and large-scale rearrangements.</title>
        <authorList>
            <person name="Losada L."/>
            <person name="Ronning C.M."/>
            <person name="DeShazer D."/>
            <person name="Woods D."/>
            <person name="Fedorova N."/>
            <person name="Kim H.S."/>
            <person name="Shabalina S.A."/>
            <person name="Pearson T.R."/>
            <person name="Brinkac L."/>
            <person name="Tan P."/>
            <person name="Nandi T."/>
            <person name="Crabtree J."/>
            <person name="Badger J."/>
            <person name="Beckstrom-Sternberg S."/>
            <person name="Saqib M."/>
            <person name="Schutzer S.E."/>
            <person name="Keim P."/>
            <person name="Nierman W.C."/>
        </authorList>
    </citation>
    <scope>NUCLEOTIDE SEQUENCE [LARGE SCALE GENOMIC DNA]</scope>
    <source>
        <strain>SAVP1</strain>
    </source>
</reference>
<accession>A1V6A8</accession>
<keyword id="KW-0963">Cytoplasm</keyword>
<keyword id="KW-0227">DNA damage</keyword>
<keyword id="KW-0228">DNA excision</keyword>
<keyword id="KW-0234">DNA repair</keyword>
<keyword id="KW-0267">Excision nuclease</keyword>
<keyword id="KW-0742">SOS response</keyword>
<dbReference type="EMBL" id="CP000526">
    <property type="protein sequence ID" value="ABM51106.1"/>
    <property type="molecule type" value="Genomic_DNA"/>
</dbReference>
<dbReference type="RefSeq" id="WP_004192853.1">
    <property type="nucleotide sequence ID" value="NC_008785.1"/>
</dbReference>
<dbReference type="SMR" id="A1V6A8"/>
<dbReference type="GeneID" id="92978320"/>
<dbReference type="KEGG" id="bmv:BMASAVP1_A2456"/>
<dbReference type="HOGENOM" id="CLU_014841_3_0_4"/>
<dbReference type="GO" id="GO:0005737">
    <property type="term" value="C:cytoplasm"/>
    <property type="evidence" value="ECO:0007669"/>
    <property type="project" value="UniProtKB-SubCell"/>
</dbReference>
<dbReference type="GO" id="GO:0009380">
    <property type="term" value="C:excinuclease repair complex"/>
    <property type="evidence" value="ECO:0007669"/>
    <property type="project" value="InterPro"/>
</dbReference>
<dbReference type="GO" id="GO:0003677">
    <property type="term" value="F:DNA binding"/>
    <property type="evidence" value="ECO:0007669"/>
    <property type="project" value="UniProtKB-UniRule"/>
</dbReference>
<dbReference type="GO" id="GO:0009381">
    <property type="term" value="F:excinuclease ABC activity"/>
    <property type="evidence" value="ECO:0007669"/>
    <property type="project" value="UniProtKB-UniRule"/>
</dbReference>
<dbReference type="GO" id="GO:0006289">
    <property type="term" value="P:nucleotide-excision repair"/>
    <property type="evidence" value="ECO:0007669"/>
    <property type="project" value="UniProtKB-UniRule"/>
</dbReference>
<dbReference type="GO" id="GO:0009432">
    <property type="term" value="P:SOS response"/>
    <property type="evidence" value="ECO:0007669"/>
    <property type="project" value="UniProtKB-UniRule"/>
</dbReference>
<dbReference type="CDD" id="cd10434">
    <property type="entry name" value="GIY-YIG_UvrC_Cho"/>
    <property type="match status" value="1"/>
</dbReference>
<dbReference type="FunFam" id="3.30.420.340:FF:000001">
    <property type="entry name" value="UvrABC system protein C"/>
    <property type="match status" value="1"/>
</dbReference>
<dbReference type="FunFam" id="3.40.1440.10:FF:000001">
    <property type="entry name" value="UvrABC system protein C"/>
    <property type="match status" value="1"/>
</dbReference>
<dbReference type="Gene3D" id="1.10.150.20">
    <property type="entry name" value="5' to 3' exonuclease, C-terminal subdomain"/>
    <property type="match status" value="1"/>
</dbReference>
<dbReference type="Gene3D" id="3.40.1440.10">
    <property type="entry name" value="GIY-YIG endonuclease"/>
    <property type="match status" value="1"/>
</dbReference>
<dbReference type="Gene3D" id="4.10.860.10">
    <property type="entry name" value="UVR domain"/>
    <property type="match status" value="1"/>
</dbReference>
<dbReference type="Gene3D" id="3.30.420.340">
    <property type="entry name" value="UvrC, RNAse H endonuclease domain"/>
    <property type="match status" value="1"/>
</dbReference>
<dbReference type="HAMAP" id="MF_00203">
    <property type="entry name" value="UvrC"/>
    <property type="match status" value="1"/>
</dbReference>
<dbReference type="InterPro" id="IPR000305">
    <property type="entry name" value="GIY-YIG_endonuc"/>
</dbReference>
<dbReference type="InterPro" id="IPR035901">
    <property type="entry name" value="GIY-YIG_endonuc_sf"/>
</dbReference>
<dbReference type="InterPro" id="IPR047296">
    <property type="entry name" value="GIY-YIG_UvrC_Cho"/>
</dbReference>
<dbReference type="InterPro" id="IPR003583">
    <property type="entry name" value="Hlx-hairpin-Hlx_DNA-bd_motif"/>
</dbReference>
<dbReference type="InterPro" id="IPR010994">
    <property type="entry name" value="RuvA_2-like"/>
</dbReference>
<dbReference type="InterPro" id="IPR001943">
    <property type="entry name" value="UVR_dom"/>
</dbReference>
<dbReference type="InterPro" id="IPR036876">
    <property type="entry name" value="UVR_dom_sf"/>
</dbReference>
<dbReference type="InterPro" id="IPR050066">
    <property type="entry name" value="UvrABC_protein_C"/>
</dbReference>
<dbReference type="InterPro" id="IPR004791">
    <property type="entry name" value="UvrC"/>
</dbReference>
<dbReference type="InterPro" id="IPR001162">
    <property type="entry name" value="UvrC_RNase_H_dom"/>
</dbReference>
<dbReference type="InterPro" id="IPR038476">
    <property type="entry name" value="UvrC_RNase_H_dom_sf"/>
</dbReference>
<dbReference type="NCBIfam" id="NF001824">
    <property type="entry name" value="PRK00558.1-5"/>
    <property type="match status" value="1"/>
</dbReference>
<dbReference type="NCBIfam" id="TIGR00194">
    <property type="entry name" value="uvrC"/>
    <property type="match status" value="1"/>
</dbReference>
<dbReference type="PANTHER" id="PTHR30562:SF1">
    <property type="entry name" value="UVRABC SYSTEM PROTEIN C"/>
    <property type="match status" value="1"/>
</dbReference>
<dbReference type="PANTHER" id="PTHR30562">
    <property type="entry name" value="UVRC/OXIDOREDUCTASE"/>
    <property type="match status" value="1"/>
</dbReference>
<dbReference type="Pfam" id="PF01541">
    <property type="entry name" value="GIY-YIG"/>
    <property type="match status" value="1"/>
</dbReference>
<dbReference type="Pfam" id="PF14520">
    <property type="entry name" value="HHH_5"/>
    <property type="match status" value="1"/>
</dbReference>
<dbReference type="Pfam" id="PF02151">
    <property type="entry name" value="UVR"/>
    <property type="match status" value="1"/>
</dbReference>
<dbReference type="Pfam" id="PF22920">
    <property type="entry name" value="UvrC_RNaseH"/>
    <property type="match status" value="2"/>
</dbReference>
<dbReference type="Pfam" id="PF08459">
    <property type="entry name" value="UvrC_RNaseH_dom"/>
    <property type="match status" value="1"/>
</dbReference>
<dbReference type="SMART" id="SM00465">
    <property type="entry name" value="GIYc"/>
    <property type="match status" value="1"/>
</dbReference>
<dbReference type="SMART" id="SM00278">
    <property type="entry name" value="HhH1"/>
    <property type="match status" value="2"/>
</dbReference>
<dbReference type="SUPFAM" id="SSF46600">
    <property type="entry name" value="C-terminal UvrC-binding domain of UvrB"/>
    <property type="match status" value="1"/>
</dbReference>
<dbReference type="SUPFAM" id="SSF82771">
    <property type="entry name" value="GIY-YIG endonuclease"/>
    <property type="match status" value="1"/>
</dbReference>
<dbReference type="SUPFAM" id="SSF47781">
    <property type="entry name" value="RuvA domain 2-like"/>
    <property type="match status" value="1"/>
</dbReference>
<dbReference type="PROSITE" id="PS50164">
    <property type="entry name" value="GIY_YIG"/>
    <property type="match status" value="1"/>
</dbReference>
<dbReference type="PROSITE" id="PS50151">
    <property type="entry name" value="UVR"/>
    <property type="match status" value="1"/>
</dbReference>
<dbReference type="PROSITE" id="PS50165">
    <property type="entry name" value="UVRC"/>
    <property type="match status" value="1"/>
</dbReference>
<organism>
    <name type="scientific">Burkholderia mallei (strain SAVP1)</name>
    <dbReference type="NCBI Taxonomy" id="320388"/>
    <lineage>
        <taxon>Bacteria</taxon>
        <taxon>Pseudomonadati</taxon>
        <taxon>Pseudomonadota</taxon>
        <taxon>Betaproteobacteria</taxon>
        <taxon>Burkholderiales</taxon>
        <taxon>Burkholderiaceae</taxon>
        <taxon>Burkholderia</taxon>
        <taxon>pseudomallei group</taxon>
    </lineage>
</organism>
<evidence type="ECO:0000255" key="1">
    <source>
        <dbReference type="HAMAP-Rule" id="MF_00203"/>
    </source>
</evidence>
<evidence type="ECO:0000256" key="2">
    <source>
        <dbReference type="SAM" id="MobiDB-lite"/>
    </source>
</evidence>
<sequence length="747" mass="80836">MTSPDAPESRFEPKPILAQLPHLPGVYRYYDVQDAVLYVGKARDLKKRVSSYFTKTQLSPRIAMMITRIARIETTVTRSEAEALLLENNLIKALAPRYNILFRDDKSYPYLKLTGHRFPRMAYYRGAVDKKNQYFGPFPSAWAVRESIQILQRVFQLRTCEDSVFNNRTRPCLLHQIGRCSAPCVGAIGEEDYARDVDNASRFLLGRQGEVMGELERKMHAFAAELKFEQAAAVRNQMSSLAKVLHQQAIDVGGDSDVDILAVVAQGGRVCVNLAMVRGGRHLGDKAYFPAHVETALALAGDIEALAGEGAGDGVQAAAQPAQAPLATDADATDAAATEAKTVTAAAAARAGARTAQAAGARAAASAEGDVERRAEGETHARADAREAAALPDGAAAAQEADADVDAAPLETEVLEAFIAQHYLGNRVPPVLVVSHAPANRELIDLLVEQAGHKVAVVRQPQGQKRAWLTMAEQNARLALARLLSEQGSQQARTRSLADVLGYESDDLAQLRIECFDISHTMGEATQASCVVYHHHRMQSSEYRRYNIAGITPGDDYAAMRQVLTRRYEKMVEEAAAEASADEAAGIDGNAVHAAASAGRLPNVVLIDGGRGQVEIARQVFSELGLDISMLVGVAKGEGRKVGLETLIFADGRAPLELGKESAALMLVAQIRDEAHRFAITGMRAKRAKTRQTSRLEELEGVGAKRRQRLLARFGGLRGVVAASVDELASVEGISRALAEQIYRQLH</sequence>
<gene>
    <name evidence="1" type="primary">uvrC</name>
    <name type="ordered locus">BMASAVP1_A2456</name>
</gene>
<name>UVRC_BURMS</name>